<dbReference type="GO" id="GO:0005576">
    <property type="term" value="C:extracellular region"/>
    <property type="evidence" value="ECO:0007669"/>
    <property type="project" value="UniProtKB-SubCell"/>
</dbReference>
<dbReference type="GO" id="GO:0007218">
    <property type="term" value="P:neuropeptide signaling pathway"/>
    <property type="evidence" value="ECO:0007669"/>
    <property type="project" value="UniProtKB-KW"/>
</dbReference>
<dbReference type="InterPro" id="IPR013231">
    <property type="entry name" value="Periviscerokinin"/>
</dbReference>
<dbReference type="Pfam" id="PF08259">
    <property type="entry name" value="Periviscerokin"/>
    <property type="match status" value="1"/>
</dbReference>
<keyword id="KW-0027">Amidation</keyword>
<keyword id="KW-0903">Direct protein sequencing</keyword>
<keyword id="KW-0527">Neuropeptide</keyword>
<keyword id="KW-0964">Secreted</keyword>
<reference evidence="3" key="1">
    <citation type="journal article" date="2005" name="Peptides">
        <title>Peptidomics of neurohemal organs from species of the cockroach family Blattidae: how do neuropeptides of closely related species differ?</title>
        <authorList>
            <person name="Predel R."/>
            <person name="Gaede G."/>
        </authorList>
    </citation>
    <scope>PROTEIN SEQUENCE</scope>
    <scope>SUBCELLULAR LOCATION</scope>
    <scope>TISSUE SPECIFICITY</scope>
    <scope>MASS SPECTROMETRY</scope>
    <scope>AMIDATION AT VAL-12</scope>
    <source>
        <tissue evidence="2">Abdominal perisympathetic organs</tissue>
    </source>
</reference>
<sequence>GSASGLISMPRV</sequence>
<accession>P84374</accession>
<name>PVK21_CELBM</name>
<organism>
    <name type="scientific">Celatoblatta sp. (strain Blue Mountains)</name>
    <name type="common">Cockroach</name>
    <dbReference type="NCBI Taxonomy" id="303880"/>
    <lineage>
        <taxon>Eukaryota</taxon>
        <taxon>Metazoa</taxon>
        <taxon>Ecdysozoa</taxon>
        <taxon>Arthropoda</taxon>
        <taxon>Hexapoda</taxon>
        <taxon>Insecta</taxon>
        <taxon>Pterygota</taxon>
        <taxon>Neoptera</taxon>
        <taxon>Polyneoptera</taxon>
        <taxon>Dictyoptera</taxon>
        <taxon>Blattodea</taxon>
        <taxon>Blattoidea</taxon>
        <taxon>Blattidae</taxon>
        <taxon>Blattinae</taxon>
        <taxon>Celatoblatta</taxon>
    </lineage>
</organism>
<proteinExistence type="evidence at protein level"/>
<protein>
    <recommendedName>
        <fullName>Periviscerokinin-2 type 1</fullName>
        <shortName>PVK-2 type 1</shortName>
    </recommendedName>
</protein>
<comment type="function">
    <text evidence="3">Mediates visceral muscle contractile activity (myotropic activity).</text>
</comment>
<comment type="subcellular location">
    <subcellularLocation>
        <location evidence="2">Secreted</location>
    </subcellularLocation>
</comment>
<comment type="tissue specificity">
    <text evidence="2">Abdominal perisympathetic organs.</text>
</comment>
<comment type="mass spectrometry"/>
<comment type="similarity">
    <text evidence="1">Belongs to the periviscerokinin family.</text>
</comment>
<feature type="peptide" id="PRO_0000044259" description="Periviscerokinin-2 type 1">
    <location>
        <begin position="1"/>
        <end position="12"/>
    </location>
</feature>
<feature type="modified residue" description="Valine amide" evidence="2">
    <location>
        <position position="12"/>
    </location>
</feature>
<evidence type="ECO:0000255" key="1"/>
<evidence type="ECO:0000269" key="2">
    <source>
    </source>
</evidence>
<evidence type="ECO:0000305" key="3"/>